<proteinExistence type="evidence at protein level"/>
<dbReference type="EMBL" id="AE009950">
    <property type="protein sequence ID" value="AAL81773.1"/>
    <property type="molecule type" value="Genomic_DNA"/>
</dbReference>
<dbReference type="RefSeq" id="WP_010867652.1">
    <property type="nucleotide sequence ID" value="NZ_CP023154.1"/>
</dbReference>
<dbReference type="PDB" id="4V6U">
    <property type="method" value="EM"/>
    <property type="resolution" value="6.60 A"/>
    <property type="chains" value="AD=1-180"/>
</dbReference>
<dbReference type="PDBsum" id="4V6U"/>
<dbReference type="EMDB" id="EMD-50611"/>
<dbReference type="EMDB" id="EMD-50612"/>
<dbReference type="EMDB" id="EMD-50613"/>
<dbReference type="SMR" id="P61993"/>
<dbReference type="STRING" id="186497.PF1649"/>
<dbReference type="PaxDb" id="186497-PF1649"/>
<dbReference type="KEGG" id="pfu:PF1649"/>
<dbReference type="PATRIC" id="fig|186497.12.peg.1715"/>
<dbReference type="eggNOG" id="arCOG04239">
    <property type="taxonomic scope" value="Archaea"/>
</dbReference>
<dbReference type="HOGENOM" id="CLU_089738_1_1_2"/>
<dbReference type="OrthoDB" id="10429at2157"/>
<dbReference type="PhylomeDB" id="P61993"/>
<dbReference type="Proteomes" id="UP000001013">
    <property type="component" value="Chromosome"/>
</dbReference>
<dbReference type="GO" id="GO:0015935">
    <property type="term" value="C:small ribosomal subunit"/>
    <property type="evidence" value="ECO:0007669"/>
    <property type="project" value="InterPro"/>
</dbReference>
<dbReference type="GO" id="GO:0019843">
    <property type="term" value="F:rRNA binding"/>
    <property type="evidence" value="ECO:0007669"/>
    <property type="project" value="UniProtKB-UniRule"/>
</dbReference>
<dbReference type="GO" id="GO:0003735">
    <property type="term" value="F:structural constituent of ribosome"/>
    <property type="evidence" value="ECO:0007669"/>
    <property type="project" value="InterPro"/>
</dbReference>
<dbReference type="GO" id="GO:0042274">
    <property type="term" value="P:ribosomal small subunit biogenesis"/>
    <property type="evidence" value="ECO:0007669"/>
    <property type="project" value="TreeGrafter"/>
</dbReference>
<dbReference type="GO" id="GO:0006412">
    <property type="term" value="P:translation"/>
    <property type="evidence" value="ECO:0007669"/>
    <property type="project" value="UniProtKB-UniRule"/>
</dbReference>
<dbReference type="CDD" id="cd00165">
    <property type="entry name" value="S4"/>
    <property type="match status" value="1"/>
</dbReference>
<dbReference type="FunFam" id="3.10.290.10:FF:000026">
    <property type="entry name" value="30S ribosomal protein S4"/>
    <property type="match status" value="1"/>
</dbReference>
<dbReference type="Gene3D" id="3.10.290.10">
    <property type="entry name" value="RNA-binding S4 domain"/>
    <property type="match status" value="1"/>
</dbReference>
<dbReference type="HAMAP" id="MF_01306_A">
    <property type="entry name" value="Ribosomal_uS4_A"/>
    <property type="match status" value="1"/>
</dbReference>
<dbReference type="InterPro" id="IPR022801">
    <property type="entry name" value="Ribosomal_uS4"/>
</dbReference>
<dbReference type="InterPro" id="IPR022802">
    <property type="entry name" value="Ribosomal_uS4_arc"/>
</dbReference>
<dbReference type="InterPro" id="IPR018079">
    <property type="entry name" value="Ribosomal_uS4_CS"/>
</dbReference>
<dbReference type="InterPro" id="IPR005710">
    <property type="entry name" value="Ribosomal_uS4_euk/arc"/>
</dbReference>
<dbReference type="InterPro" id="IPR001912">
    <property type="entry name" value="Ribosomal_uS4_N"/>
</dbReference>
<dbReference type="InterPro" id="IPR002942">
    <property type="entry name" value="S4_RNA-bd"/>
</dbReference>
<dbReference type="InterPro" id="IPR036986">
    <property type="entry name" value="S4_RNA-bd_sf"/>
</dbReference>
<dbReference type="NCBIfam" id="NF003139">
    <property type="entry name" value="PRK04051.1"/>
    <property type="match status" value="1"/>
</dbReference>
<dbReference type="NCBIfam" id="TIGR01018">
    <property type="entry name" value="uS4_arch"/>
    <property type="match status" value="1"/>
</dbReference>
<dbReference type="PANTHER" id="PTHR11831">
    <property type="entry name" value="30S 40S RIBOSOMAL PROTEIN"/>
    <property type="match status" value="1"/>
</dbReference>
<dbReference type="PANTHER" id="PTHR11831:SF5">
    <property type="entry name" value="40S RIBOSOMAL PROTEIN S9"/>
    <property type="match status" value="1"/>
</dbReference>
<dbReference type="Pfam" id="PF00163">
    <property type="entry name" value="Ribosomal_S4"/>
    <property type="match status" value="1"/>
</dbReference>
<dbReference type="Pfam" id="PF01479">
    <property type="entry name" value="S4"/>
    <property type="match status" value="1"/>
</dbReference>
<dbReference type="SMART" id="SM01390">
    <property type="entry name" value="Ribosomal_S4"/>
    <property type="match status" value="1"/>
</dbReference>
<dbReference type="SMART" id="SM00363">
    <property type="entry name" value="S4"/>
    <property type="match status" value="1"/>
</dbReference>
<dbReference type="SUPFAM" id="SSF55174">
    <property type="entry name" value="Alpha-L RNA-binding motif"/>
    <property type="match status" value="1"/>
</dbReference>
<dbReference type="PROSITE" id="PS00632">
    <property type="entry name" value="RIBOSOMAL_S4"/>
    <property type="match status" value="1"/>
</dbReference>
<dbReference type="PROSITE" id="PS50889">
    <property type="entry name" value="S4"/>
    <property type="match status" value="1"/>
</dbReference>
<accession>P61993</accession>
<accession>Q9V199</accession>
<reference key="1">
    <citation type="journal article" date="1999" name="Genetics">
        <title>Divergence of the hyperthermophilic archaea Pyrococcus furiosus and P. horikoshii inferred from complete genomic sequences.</title>
        <authorList>
            <person name="Maeder D.L."/>
            <person name="Weiss R.B."/>
            <person name="Dunn D.M."/>
            <person name="Cherry J.L."/>
            <person name="Gonzalez J.M."/>
            <person name="DiRuggiero J."/>
            <person name="Robb F.T."/>
        </authorList>
    </citation>
    <scope>NUCLEOTIDE SEQUENCE [LARGE SCALE GENOMIC DNA]</scope>
    <source>
        <strain>ATCC 43587 / DSM 3638 / JCM 8422 / Vc1</strain>
    </source>
</reference>
<reference evidence="3" key="2">
    <citation type="journal article" date="2013" name="Nucleic Acids Res.">
        <title>Promiscuous behaviour of archaeal ribosomal proteins: implications for eukaryotic ribosome evolution.</title>
        <authorList>
            <person name="Armache J.P."/>
            <person name="Anger A.M."/>
            <person name="Marquez V."/>
            <person name="Franckenberg S."/>
            <person name="Frohlich T."/>
            <person name="Villa E."/>
            <person name="Berninghausen O."/>
            <person name="Thomm M."/>
            <person name="Arnold G.J."/>
            <person name="Beckmann R."/>
            <person name="Wilson D.N."/>
        </authorList>
    </citation>
    <scope>STRUCTURE BY ELECTRON MICROSCOPY (6.60 ANGSTROMS) IN THE 70S RIBOSOME</scope>
    <scope>SUBUNIT</scope>
</reference>
<comment type="function">
    <text evidence="1">One of the primary rRNA binding proteins, it binds directly to 16S rRNA where it nucleates assembly of the body of the 30S subunit.</text>
</comment>
<comment type="function">
    <text evidence="1">With S5 and S12 plays an important role in translational accuracy.</text>
</comment>
<comment type="subunit">
    <text evidence="1 2">Part of the 30S ribosomal subunit (PubMed:23222135). Contacts protein S5. The interaction surface between S4 and S5 is involved in control of translational fidelity.</text>
</comment>
<comment type="similarity">
    <text evidence="1">Belongs to the universal ribosomal protein uS4 family.</text>
</comment>
<sequence>MGDPKRQRKKYETPPHPWIKERLDRERVLMDKYELKNKKELWKHETQLKNFRRRARRLLAARGKQAEIEREQLLARLKRLGLLPEDAVLDDVLSLTIEDILERRLQTIVYKKGLARTMRQARQLIVHGHIEVNGQIIRSPSYLVLKEEEDTITYARTSPFANPQHPERMMIEKAKQGGEA</sequence>
<keyword id="KW-0002">3D-structure</keyword>
<keyword id="KW-1185">Reference proteome</keyword>
<keyword id="KW-0687">Ribonucleoprotein</keyword>
<keyword id="KW-0689">Ribosomal protein</keyword>
<keyword id="KW-0694">RNA-binding</keyword>
<keyword id="KW-0699">rRNA-binding</keyword>
<feature type="chain" id="PRO_0000132517" description="Small ribosomal subunit protein uS4">
    <location>
        <begin position="1"/>
        <end position="180"/>
    </location>
</feature>
<feature type="domain" description="S4 RNA-binding" evidence="1">
    <location>
        <begin position="103"/>
        <end position="174"/>
    </location>
</feature>
<gene>
    <name evidence="1" type="primary">rps4</name>
    <name type="ordered locus">PF1649</name>
</gene>
<protein>
    <recommendedName>
        <fullName evidence="1">Small ribosomal subunit protein uS4</fullName>
    </recommendedName>
    <alternativeName>
        <fullName>30S ribosomal protein S4</fullName>
    </alternativeName>
</protein>
<name>RS4_PYRFU</name>
<organism>
    <name type="scientific">Pyrococcus furiosus (strain ATCC 43587 / DSM 3638 / JCM 8422 / Vc1)</name>
    <dbReference type="NCBI Taxonomy" id="186497"/>
    <lineage>
        <taxon>Archaea</taxon>
        <taxon>Methanobacteriati</taxon>
        <taxon>Methanobacteriota</taxon>
        <taxon>Thermococci</taxon>
        <taxon>Thermococcales</taxon>
        <taxon>Thermococcaceae</taxon>
        <taxon>Pyrococcus</taxon>
    </lineage>
</organism>
<evidence type="ECO:0000255" key="1">
    <source>
        <dbReference type="HAMAP-Rule" id="MF_01306"/>
    </source>
</evidence>
<evidence type="ECO:0000269" key="2">
    <source>
    </source>
</evidence>
<evidence type="ECO:0007744" key="3">
    <source>
        <dbReference type="PDB" id="4V6U"/>
    </source>
</evidence>